<protein>
    <recommendedName>
        <fullName evidence="1">Large ribosomal subunit protein bL33</fullName>
    </recommendedName>
    <alternativeName>
        <fullName evidence="2">50S ribosomal protein L33</fullName>
    </alternativeName>
</protein>
<feature type="chain" id="PRO_0000356424" description="Large ribosomal subunit protein bL33">
    <location>
        <begin position="1"/>
        <end position="52"/>
    </location>
</feature>
<evidence type="ECO:0000255" key="1">
    <source>
        <dbReference type="HAMAP-Rule" id="MF_00294"/>
    </source>
</evidence>
<evidence type="ECO:0000305" key="2"/>
<comment type="similarity">
    <text evidence="1">Belongs to the bacterial ribosomal protein bL33 family.</text>
</comment>
<name>RL33_CHLTA</name>
<proteinExistence type="inferred from homology"/>
<gene>
    <name evidence="1" type="primary">rpmG</name>
    <name type="ordered locus">CTA_0159</name>
</gene>
<dbReference type="EMBL" id="CP000051">
    <property type="protein sequence ID" value="AAX50403.1"/>
    <property type="molecule type" value="Genomic_DNA"/>
</dbReference>
<dbReference type="RefSeq" id="WP_009871496.1">
    <property type="nucleotide sequence ID" value="NC_007429.1"/>
</dbReference>
<dbReference type="SMR" id="Q3KML9"/>
<dbReference type="KEGG" id="cta:CTA_0159"/>
<dbReference type="HOGENOM" id="CLU_190949_1_1_0"/>
<dbReference type="Proteomes" id="UP000002532">
    <property type="component" value="Chromosome"/>
</dbReference>
<dbReference type="GO" id="GO:0022625">
    <property type="term" value="C:cytosolic large ribosomal subunit"/>
    <property type="evidence" value="ECO:0007669"/>
    <property type="project" value="TreeGrafter"/>
</dbReference>
<dbReference type="GO" id="GO:0003735">
    <property type="term" value="F:structural constituent of ribosome"/>
    <property type="evidence" value="ECO:0007669"/>
    <property type="project" value="InterPro"/>
</dbReference>
<dbReference type="GO" id="GO:0006412">
    <property type="term" value="P:translation"/>
    <property type="evidence" value="ECO:0007669"/>
    <property type="project" value="UniProtKB-UniRule"/>
</dbReference>
<dbReference type="FunFam" id="2.20.28.120:FF:000009">
    <property type="entry name" value="50S ribosomal protein L33"/>
    <property type="match status" value="1"/>
</dbReference>
<dbReference type="Gene3D" id="2.20.28.120">
    <property type="entry name" value="Ribosomal protein L33"/>
    <property type="match status" value="1"/>
</dbReference>
<dbReference type="HAMAP" id="MF_00294">
    <property type="entry name" value="Ribosomal_bL33"/>
    <property type="match status" value="1"/>
</dbReference>
<dbReference type="InterPro" id="IPR001705">
    <property type="entry name" value="Ribosomal_bL33"/>
</dbReference>
<dbReference type="InterPro" id="IPR018264">
    <property type="entry name" value="Ribosomal_bL33_CS"/>
</dbReference>
<dbReference type="InterPro" id="IPR038584">
    <property type="entry name" value="Ribosomal_bL33_sf"/>
</dbReference>
<dbReference type="InterPro" id="IPR011332">
    <property type="entry name" value="Ribosomal_zn-bd"/>
</dbReference>
<dbReference type="NCBIfam" id="NF001860">
    <property type="entry name" value="PRK00595.1"/>
    <property type="match status" value="1"/>
</dbReference>
<dbReference type="NCBIfam" id="TIGR01023">
    <property type="entry name" value="rpmG_bact"/>
    <property type="match status" value="1"/>
</dbReference>
<dbReference type="PANTHER" id="PTHR15238">
    <property type="entry name" value="54S RIBOSOMAL PROTEIN L39, MITOCHONDRIAL"/>
    <property type="match status" value="1"/>
</dbReference>
<dbReference type="PANTHER" id="PTHR15238:SF1">
    <property type="entry name" value="LARGE RIBOSOMAL SUBUNIT PROTEIN BL33M"/>
    <property type="match status" value="1"/>
</dbReference>
<dbReference type="Pfam" id="PF00471">
    <property type="entry name" value="Ribosomal_L33"/>
    <property type="match status" value="1"/>
</dbReference>
<dbReference type="SUPFAM" id="SSF57829">
    <property type="entry name" value="Zn-binding ribosomal proteins"/>
    <property type="match status" value="1"/>
</dbReference>
<dbReference type="PROSITE" id="PS00582">
    <property type="entry name" value="RIBOSOMAL_L33"/>
    <property type="match status" value="1"/>
</dbReference>
<organism>
    <name type="scientific">Chlamydia trachomatis serovar A (strain ATCC VR-571B / DSM 19440 / HAR-13)</name>
    <dbReference type="NCBI Taxonomy" id="315277"/>
    <lineage>
        <taxon>Bacteria</taxon>
        <taxon>Pseudomonadati</taxon>
        <taxon>Chlamydiota</taxon>
        <taxon>Chlamydiia</taxon>
        <taxon>Chlamydiales</taxon>
        <taxon>Chlamydiaceae</taxon>
        <taxon>Chlamydia/Chlamydophila group</taxon>
        <taxon>Chlamydia</taxon>
    </lineage>
</organism>
<sequence length="52" mass="6313">MASKNREIIKLKSTESSEMYWTVKNKRKTSGRLELKKYDRKLRKHVIFKEAK</sequence>
<accession>Q3KML9</accession>
<reference key="1">
    <citation type="journal article" date="2005" name="Infect. Immun.">
        <title>Comparative genomic analysis of Chlamydia trachomatis oculotropic and genitotropic strains.</title>
        <authorList>
            <person name="Carlson J.H."/>
            <person name="Porcella S.F."/>
            <person name="McClarty G."/>
            <person name="Caldwell H.D."/>
        </authorList>
    </citation>
    <scope>NUCLEOTIDE SEQUENCE [LARGE SCALE GENOMIC DNA]</scope>
    <source>
        <strain>ATCC VR-571B / DSM 19440 / HAR-13</strain>
    </source>
</reference>
<keyword id="KW-0687">Ribonucleoprotein</keyword>
<keyword id="KW-0689">Ribosomal protein</keyword>